<accession>Q78DX7</accession>
<accession>Q60705</accession>
<gene>
    <name type="primary">Ros1</name>
    <name type="synonym">Ros</name>
    <name type="synonym">Ros-1</name>
</gene>
<evidence type="ECO:0000250" key="1">
    <source>
        <dbReference type="UniProtKB" id="P08922"/>
    </source>
</evidence>
<evidence type="ECO:0000255" key="2"/>
<evidence type="ECO:0000255" key="3">
    <source>
        <dbReference type="PROSITE-ProRule" id="PRU00159"/>
    </source>
</evidence>
<evidence type="ECO:0000255" key="4">
    <source>
        <dbReference type="PROSITE-ProRule" id="PRU00316"/>
    </source>
</evidence>
<evidence type="ECO:0000255" key="5">
    <source>
        <dbReference type="PROSITE-ProRule" id="PRU10028"/>
    </source>
</evidence>
<evidence type="ECO:0000269" key="6">
    <source>
    </source>
</evidence>
<evidence type="ECO:0000269" key="7">
    <source>
    </source>
</evidence>
<evidence type="ECO:0000269" key="8">
    <source>
    </source>
</evidence>
<evidence type="ECO:0000269" key="9">
    <source>
    </source>
</evidence>
<evidence type="ECO:0000269" key="10">
    <source>
    </source>
</evidence>
<evidence type="ECO:0000269" key="11">
    <source>
    </source>
</evidence>
<evidence type="ECO:0000305" key="12"/>
<feature type="signal peptide" evidence="2">
    <location>
        <begin position="1"/>
        <end position="28"/>
    </location>
</feature>
<feature type="chain" id="PRO_0000278115" description="Proto-oncogene tyrosine-protein kinase ROS">
    <location>
        <begin position="29"/>
        <end position="2340"/>
    </location>
</feature>
<feature type="topological domain" description="Extracellular" evidence="2">
    <location>
        <begin position="29"/>
        <end position="1854"/>
    </location>
</feature>
<feature type="transmembrane region" description="Helical" evidence="2">
    <location>
        <begin position="1855"/>
        <end position="1875"/>
    </location>
</feature>
<feature type="topological domain" description="Cytoplasmic" evidence="2">
    <location>
        <begin position="1876"/>
        <end position="2340"/>
    </location>
</feature>
<feature type="domain" description="Fibronectin type-III 1" evidence="4">
    <location>
        <begin position="111"/>
        <end position="206"/>
    </location>
</feature>
<feature type="domain" description="Fibronectin type-III 2" evidence="4">
    <location>
        <begin position="207"/>
        <end position="295"/>
    </location>
</feature>
<feature type="domain" description="Fibronectin type-III 3" evidence="4">
    <location>
        <begin position="567"/>
        <end position="667"/>
    </location>
</feature>
<feature type="domain" description="Fibronectin type-III 4" evidence="4">
    <location>
        <begin position="943"/>
        <end position="1038"/>
    </location>
</feature>
<feature type="domain" description="Fibronectin type-III 5" evidence="4">
    <location>
        <begin position="1039"/>
        <end position="1146"/>
    </location>
</feature>
<feature type="domain" description="Fibronectin type-III 6" evidence="4">
    <location>
        <begin position="1442"/>
        <end position="1549"/>
    </location>
</feature>
<feature type="domain" description="Fibronectin type-III 7" evidence="4">
    <location>
        <begin position="1550"/>
        <end position="1649"/>
    </location>
</feature>
<feature type="domain" description="Fibronectin type-III 8" evidence="4">
    <location>
        <begin position="1651"/>
        <end position="1744"/>
    </location>
</feature>
<feature type="domain" description="Fibronectin type-III 9" evidence="4">
    <location>
        <begin position="1745"/>
        <end position="1846"/>
    </location>
</feature>
<feature type="domain" description="Protein kinase" evidence="3">
    <location>
        <begin position="1938"/>
        <end position="2216"/>
    </location>
</feature>
<feature type="active site" description="Proton acceptor" evidence="3 5">
    <location>
        <position position="2072"/>
    </location>
</feature>
<feature type="binding site" evidence="3">
    <location>
        <begin position="1944"/>
        <end position="1952"/>
    </location>
    <ligand>
        <name>ATP</name>
        <dbReference type="ChEBI" id="CHEBI:30616"/>
    </ligand>
</feature>
<feature type="binding site" evidence="3">
    <location>
        <position position="1973"/>
    </location>
    <ligand>
        <name>ATP</name>
        <dbReference type="ChEBI" id="CHEBI:30616"/>
    </ligand>
</feature>
<feature type="modified residue" description="Phosphotyrosine; by autocatalysis" evidence="6">
    <location>
        <position position="2267"/>
    </location>
</feature>
<feature type="modified residue" description="Phosphotyrosine; by autocatalysis" evidence="1">
    <location>
        <position position="2327"/>
    </location>
</feature>
<feature type="glycosylation site" description="N-linked (GlcNAc...) asparagine" evidence="2">
    <location>
        <position position="53"/>
    </location>
</feature>
<feature type="glycosylation site" description="N-linked (GlcNAc...) asparagine" evidence="2">
    <location>
        <position position="334"/>
    </location>
</feature>
<feature type="glycosylation site" description="N-linked (GlcNAc...) asparagine" evidence="2">
    <location>
        <position position="362"/>
    </location>
</feature>
<feature type="glycosylation site" description="N-linked (GlcNAc...) asparagine" evidence="2">
    <location>
        <position position="935"/>
    </location>
</feature>
<feature type="glycosylation site" description="N-linked (GlcNAc...) asparagine" evidence="2">
    <location>
        <position position="1011"/>
    </location>
</feature>
<feature type="glycosylation site" description="N-linked (GlcNAc...) asparagine" evidence="2">
    <location>
        <position position="1243"/>
    </location>
</feature>
<feature type="glycosylation site" description="N-linked (GlcNAc...) asparagine" evidence="2">
    <location>
        <position position="1676"/>
    </location>
</feature>
<feature type="mutagenesis site" description="Abrogates interaction with PTPN6." evidence="6">
    <original>Y</original>
    <variation>F</variation>
    <location>
        <position position="2267"/>
    </location>
</feature>
<feature type="sequence conflict" description="In Ref. 2; AAA50600." evidence="12" ref="2">
    <original>Q</original>
    <variation>L</variation>
    <location>
        <position position="27"/>
    </location>
</feature>
<feature type="sequence conflict" description="In Ref. 2; AAA50600." evidence="12" ref="2">
    <original>TEL</original>
    <variation>QAI</variation>
    <location>
        <begin position="109"/>
        <end position="111"/>
    </location>
</feature>
<feature type="sequence conflict" description="In Ref. 2; AAA50600." evidence="12" ref="2">
    <original>D</original>
    <variation>Y</variation>
    <location>
        <position position="329"/>
    </location>
</feature>
<feature type="sequence conflict" description="In Ref. 2; AAA50600." evidence="12" ref="2">
    <original>I</original>
    <variation>V</variation>
    <location>
        <position position="419"/>
    </location>
</feature>
<feature type="sequence conflict" description="In Ref. 2; AAA50600." evidence="12" ref="2">
    <original>A</original>
    <variation>P</variation>
    <location>
        <position position="591"/>
    </location>
</feature>
<feature type="sequence conflict" description="In Ref. 2; AAA50600." evidence="12" ref="2">
    <original>G</original>
    <variation>P</variation>
    <location>
        <position position="595"/>
    </location>
</feature>
<feature type="sequence conflict" description="In Ref. 2; AAA50600." evidence="12" ref="2">
    <original>NV</original>
    <variation>KL</variation>
    <location>
        <begin position="631"/>
        <end position="632"/>
    </location>
</feature>
<feature type="sequence conflict" description="In Ref. 2; AAA50600." evidence="12" ref="2">
    <original>TVSV</original>
    <variation>PFSC</variation>
    <location>
        <begin position="642"/>
        <end position="645"/>
    </location>
</feature>
<feature type="sequence conflict" description="In Ref. 2; AAA50600." evidence="12" ref="2">
    <original>W</original>
    <variation>G</variation>
    <location>
        <position position="656"/>
    </location>
</feature>
<feature type="sequence conflict" description="In Ref. 2; AAA50600." evidence="12" ref="2">
    <original>PP</original>
    <variation>LL</variation>
    <location>
        <begin position="671"/>
        <end position="672"/>
    </location>
</feature>
<feature type="sequence conflict" description="In Ref. 2; AAA50600." evidence="12" ref="2">
    <original>I</original>
    <variation>V</variation>
    <location>
        <position position="830"/>
    </location>
</feature>
<feature type="sequence conflict" description="In Ref. 2; AAA50600." evidence="12" ref="2">
    <original>S</original>
    <variation>R</variation>
    <location>
        <position position="1050"/>
    </location>
</feature>
<feature type="sequence conflict" description="In Ref. 2; AAA50600." evidence="12" ref="2">
    <original>N</original>
    <variation>D</variation>
    <location>
        <position position="1066"/>
    </location>
</feature>
<feature type="sequence conflict" description="In Ref. 2; AAA50600." evidence="12" ref="2">
    <original>S</original>
    <variation>F</variation>
    <location>
        <position position="1085"/>
    </location>
</feature>
<feature type="sequence conflict" description="In Ref. 2; AAA50600." evidence="12" ref="2">
    <original>Y</original>
    <variation>C</variation>
    <location>
        <position position="1235"/>
    </location>
</feature>
<feature type="sequence conflict" description="In Ref. 2; AAA50600." evidence="12" ref="2">
    <original>I</original>
    <variation>T</variation>
    <location>
        <position position="1276"/>
    </location>
</feature>
<feature type="sequence conflict" description="In Ref. 2; AAA50600." evidence="12" ref="2">
    <original>V</original>
    <variation>L</variation>
    <location>
        <position position="1371"/>
    </location>
</feature>
<feature type="sequence conflict" description="In Ref. 2; AAA50600." evidence="12" ref="2">
    <original>SA</original>
    <variation>FR</variation>
    <location>
        <begin position="1428"/>
        <end position="1429"/>
    </location>
</feature>
<feature type="sequence conflict" description="In Ref. 2; AAA50600." evidence="12" ref="2">
    <original>ME</original>
    <variation>IK</variation>
    <location>
        <begin position="1486"/>
        <end position="1487"/>
    </location>
</feature>
<feature type="sequence conflict" description="In Ref. 2; AAA50600." evidence="12" ref="2">
    <original>EIQGQ</original>
    <variation>RFKDK</variation>
    <location>
        <begin position="1541"/>
        <end position="1545"/>
    </location>
</feature>
<feature type="sequence conflict" description="In Ref. 2; AAA50600." evidence="12" ref="2">
    <original>RYQLVMSY</original>
    <variation>AISWLMSD</variation>
    <location>
        <begin position="1585"/>
        <end position="1592"/>
    </location>
</feature>
<feature type="sequence conflict" description="In Ref. 2; AAA50600." evidence="12" ref="2">
    <original>W</original>
    <variation>R</variation>
    <location>
        <position position="1669"/>
    </location>
</feature>
<feature type="sequence conflict" description="In Ref. 2; AAA50600." evidence="12" ref="2">
    <original>T</original>
    <variation>S</variation>
    <location>
        <position position="1778"/>
    </location>
</feature>
<feature type="sequence conflict" description="In Ref. 2; AAA50600." evidence="12" ref="2">
    <original>N</original>
    <variation>S</variation>
    <location>
        <position position="1893"/>
    </location>
</feature>
<feature type="sequence conflict" description="In Ref. 2; AAA50600." evidence="12" ref="2">
    <original>AV</original>
    <variation>GI</variation>
    <location>
        <begin position="1917"/>
        <end position="1918"/>
    </location>
</feature>
<feature type="sequence conflict" description="In Ref. 2; AAA50600." evidence="12" ref="2">
    <original>S</original>
    <variation>N</variation>
    <location>
        <position position="2087"/>
    </location>
</feature>
<feature type="sequence conflict" description="In Ref. 2; AAA50600." evidence="12" ref="2">
    <original>V</original>
    <variation>A</variation>
    <location>
        <position position="2118"/>
    </location>
</feature>
<feature type="sequence conflict" description="In Ref. 2; AAA50600." evidence="12" ref="2">
    <original>LAT</original>
    <variation>VPQ</variation>
    <location>
        <begin position="2270"/>
        <end position="2272"/>
    </location>
</feature>
<feature type="sequence conflict" description="In Ref. 2; AAA50600." evidence="12" ref="2">
    <original>S</original>
    <variation>R</variation>
    <location>
        <position position="2333"/>
    </location>
</feature>
<dbReference type="EC" id="2.7.10.1" evidence="1"/>
<dbReference type="EMBL" id="X81650">
    <property type="protein sequence ID" value="CAA57310.1"/>
    <property type="molecule type" value="mRNA"/>
</dbReference>
<dbReference type="EMBL" id="U15443">
    <property type="protein sequence ID" value="AAA50600.1"/>
    <property type="molecule type" value="mRNA"/>
</dbReference>
<dbReference type="CCDS" id="CCDS23838.1"/>
<dbReference type="RefSeq" id="NP_035412.2">
    <property type="nucleotide sequence ID" value="NM_011282.2"/>
</dbReference>
<dbReference type="SMR" id="Q78DX7"/>
<dbReference type="FunCoup" id="Q78DX7">
    <property type="interactions" value="15"/>
</dbReference>
<dbReference type="IntAct" id="Q78DX7">
    <property type="interactions" value="2"/>
</dbReference>
<dbReference type="MINT" id="Q78DX7"/>
<dbReference type="STRING" id="10090.ENSMUSP00000020045"/>
<dbReference type="BindingDB" id="Q78DX7"/>
<dbReference type="ChEMBL" id="CHEMBL2034802"/>
<dbReference type="GlyCosmos" id="Q78DX7">
    <property type="glycosylation" value="7 sites, No reported glycans"/>
</dbReference>
<dbReference type="GlyGen" id="Q78DX7">
    <property type="glycosylation" value="7 sites"/>
</dbReference>
<dbReference type="iPTMnet" id="Q78DX7"/>
<dbReference type="PhosphoSitePlus" id="Q78DX7"/>
<dbReference type="PaxDb" id="10090-ENSMUSP00000020045"/>
<dbReference type="ProteomicsDB" id="300468"/>
<dbReference type="Antibodypedia" id="32541">
    <property type="antibodies" value="700 antibodies from 37 providers"/>
</dbReference>
<dbReference type="DNASU" id="19886"/>
<dbReference type="Ensembl" id="ENSMUST00000020045.10">
    <property type="protein sequence ID" value="ENSMUSP00000020045.4"/>
    <property type="gene ID" value="ENSMUSG00000019893.14"/>
</dbReference>
<dbReference type="GeneID" id="19886"/>
<dbReference type="KEGG" id="mmu:19886"/>
<dbReference type="UCSC" id="uc007fbb.1">
    <property type="organism name" value="mouse"/>
</dbReference>
<dbReference type="AGR" id="MGI:97999"/>
<dbReference type="CTD" id="6098"/>
<dbReference type="MGI" id="MGI:97999">
    <property type="gene designation" value="Ros1"/>
</dbReference>
<dbReference type="VEuPathDB" id="HostDB:ENSMUSG00000019893"/>
<dbReference type="eggNOG" id="KOG1095">
    <property type="taxonomic scope" value="Eukaryota"/>
</dbReference>
<dbReference type="GeneTree" id="ENSGT00940000160831"/>
<dbReference type="HOGENOM" id="CLU_000798_0_0_1"/>
<dbReference type="InParanoid" id="Q78DX7"/>
<dbReference type="OMA" id="RDYWHLQ"/>
<dbReference type="OrthoDB" id="65481at2759"/>
<dbReference type="PhylomeDB" id="Q78DX7"/>
<dbReference type="TreeFam" id="TF351636"/>
<dbReference type="BioGRID-ORCS" id="19886">
    <property type="hits" value="2 hits in 80 CRISPR screens"/>
</dbReference>
<dbReference type="ChiTaRS" id="Ros1">
    <property type="organism name" value="mouse"/>
</dbReference>
<dbReference type="PRO" id="PR:Q78DX7"/>
<dbReference type="Proteomes" id="UP000000589">
    <property type="component" value="Chromosome 10"/>
</dbReference>
<dbReference type="RNAct" id="Q78DX7">
    <property type="molecule type" value="protein"/>
</dbReference>
<dbReference type="Bgee" id="ENSMUSG00000019893">
    <property type="expression patterns" value="Expressed in semen and 32 other cell types or tissues"/>
</dbReference>
<dbReference type="ExpressionAtlas" id="Q78DX7">
    <property type="expression patterns" value="baseline and differential"/>
</dbReference>
<dbReference type="GO" id="GO:0009986">
    <property type="term" value="C:cell surface"/>
    <property type="evidence" value="ECO:0000314"/>
    <property type="project" value="MGI"/>
</dbReference>
<dbReference type="GO" id="GO:0048471">
    <property type="term" value="C:perinuclear region of cytoplasm"/>
    <property type="evidence" value="ECO:0000314"/>
    <property type="project" value="MGI"/>
</dbReference>
<dbReference type="GO" id="GO:0005886">
    <property type="term" value="C:plasma membrane"/>
    <property type="evidence" value="ECO:0007669"/>
    <property type="project" value="UniProtKB-SubCell"/>
</dbReference>
<dbReference type="GO" id="GO:0005524">
    <property type="term" value="F:ATP binding"/>
    <property type="evidence" value="ECO:0007669"/>
    <property type="project" value="UniProtKB-KW"/>
</dbReference>
<dbReference type="GO" id="GO:0019903">
    <property type="term" value="F:protein phosphatase binding"/>
    <property type="evidence" value="ECO:0000353"/>
    <property type="project" value="UniProtKB"/>
</dbReference>
<dbReference type="GO" id="GO:0004713">
    <property type="term" value="F:protein tyrosine kinase activity"/>
    <property type="evidence" value="ECO:0000250"/>
    <property type="project" value="UniProtKB"/>
</dbReference>
<dbReference type="GO" id="GO:0004714">
    <property type="term" value="F:transmembrane receptor protein tyrosine kinase activity"/>
    <property type="evidence" value="ECO:0007669"/>
    <property type="project" value="UniProtKB-EC"/>
</dbReference>
<dbReference type="GO" id="GO:0030154">
    <property type="term" value="P:cell differentiation"/>
    <property type="evidence" value="ECO:0000314"/>
    <property type="project" value="UniProtKB"/>
</dbReference>
<dbReference type="GO" id="GO:0002066">
    <property type="term" value="P:columnar/cuboidal epithelial cell development"/>
    <property type="evidence" value="ECO:0000315"/>
    <property type="project" value="UniProtKB"/>
</dbReference>
<dbReference type="GO" id="GO:0010467">
    <property type="term" value="P:gene expression"/>
    <property type="evidence" value="ECO:0000315"/>
    <property type="project" value="MGI"/>
</dbReference>
<dbReference type="GO" id="GO:0010629">
    <property type="term" value="P:negative regulation of gene expression"/>
    <property type="evidence" value="ECO:0000315"/>
    <property type="project" value="MGI"/>
</dbReference>
<dbReference type="GO" id="GO:0006468">
    <property type="term" value="P:protein phosphorylation"/>
    <property type="evidence" value="ECO:0000314"/>
    <property type="project" value="UniProtKB"/>
</dbReference>
<dbReference type="GO" id="GO:0001558">
    <property type="term" value="P:regulation of cell growth"/>
    <property type="evidence" value="ECO:0000250"/>
    <property type="project" value="UniProtKB"/>
</dbReference>
<dbReference type="GO" id="GO:0070372">
    <property type="term" value="P:regulation of ERK1 and ERK2 cascade"/>
    <property type="evidence" value="ECO:0000314"/>
    <property type="project" value="UniProtKB"/>
</dbReference>
<dbReference type="GO" id="GO:0010966">
    <property type="term" value="P:regulation of phosphate transport"/>
    <property type="evidence" value="ECO:0000315"/>
    <property type="project" value="MGI"/>
</dbReference>
<dbReference type="GO" id="GO:0032006">
    <property type="term" value="P:regulation of TOR signaling"/>
    <property type="evidence" value="ECO:0000250"/>
    <property type="project" value="UniProtKB"/>
</dbReference>
<dbReference type="GO" id="GO:0007165">
    <property type="term" value="P:signal transduction"/>
    <property type="evidence" value="ECO:0000314"/>
    <property type="project" value="MGI"/>
</dbReference>
<dbReference type="GO" id="GO:0007283">
    <property type="term" value="P:spermatogenesis"/>
    <property type="evidence" value="ECO:0000315"/>
    <property type="project" value="UniProtKB"/>
</dbReference>
<dbReference type="CDD" id="cd00063">
    <property type="entry name" value="FN3"/>
    <property type="match status" value="8"/>
</dbReference>
<dbReference type="CDD" id="cd05044">
    <property type="entry name" value="PTKc_c-ros"/>
    <property type="match status" value="1"/>
</dbReference>
<dbReference type="FunFam" id="1.10.510.10:FF:000341">
    <property type="entry name" value="Tyrosine-protein kinase receptor"/>
    <property type="match status" value="1"/>
</dbReference>
<dbReference type="FunFam" id="2.120.10.30:FF:000038">
    <property type="entry name" value="Tyrosine-protein kinase receptor"/>
    <property type="match status" value="1"/>
</dbReference>
<dbReference type="FunFam" id="2.120.10.30:FF:000042">
    <property type="entry name" value="Tyrosine-protein kinase receptor"/>
    <property type="match status" value="1"/>
</dbReference>
<dbReference type="FunFam" id="2.120.10.30:FF:000044">
    <property type="entry name" value="Tyrosine-protein kinase receptor"/>
    <property type="match status" value="1"/>
</dbReference>
<dbReference type="FunFam" id="2.60.40.10:FF:000882">
    <property type="entry name" value="Tyrosine-protein kinase receptor"/>
    <property type="match status" value="1"/>
</dbReference>
<dbReference type="FunFam" id="2.60.40.10:FF:000984">
    <property type="entry name" value="Tyrosine-protein kinase receptor"/>
    <property type="match status" value="1"/>
</dbReference>
<dbReference type="FunFam" id="2.60.40.10:FF:001018">
    <property type="entry name" value="Tyrosine-protein kinase receptor"/>
    <property type="match status" value="1"/>
</dbReference>
<dbReference type="FunFam" id="2.60.40.10:FF:001024">
    <property type="entry name" value="Tyrosine-protein kinase receptor"/>
    <property type="match status" value="1"/>
</dbReference>
<dbReference type="FunFam" id="2.60.40.10:FF:001074">
    <property type="entry name" value="Tyrosine-protein kinase receptor"/>
    <property type="match status" value="1"/>
</dbReference>
<dbReference type="FunFam" id="2.60.40.10:FF:001237">
    <property type="entry name" value="Tyrosine-protein kinase receptor"/>
    <property type="match status" value="1"/>
</dbReference>
<dbReference type="FunFam" id="2.60.40.10:FF:001816">
    <property type="entry name" value="Tyrosine-protein kinase receptor"/>
    <property type="match status" value="1"/>
</dbReference>
<dbReference type="FunFam" id="3.30.200.20:FF:000301">
    <property type="entry name" value="Tyrosine-protein kinase receptor"/>
    <property type="match status" value="1"/>
</dbReference>
<dbReference type="Gene3D" id="2.60.40.10">
    <property type="entry name" value="Immunoglobulins"/>
    <property type="match status" value="8"/>
</dbReference>
<dbReference type="Gene3D" id="3.30.200.20">
    <property type="entry name" value="Phosphorylase Kinase, domain 1"/>
    <property type="match status" value="1"/>
</dbReference>
<dbReference type="Gene3D" id="2.120.10.30">
    <property type="entry name" value="TolB, C-terminal domain"/>
    <property type="match status" value="3"/>
</dbReference>
<dbReference type="Gene3D" id="1.10.510.10">
    <property type="entry name" value="Transferase(Phosphotransferase) domain 1"/>
    <property type="match status" value="1"/>
</dbReference>
<dbReference type="InterPro" id="IPR011042">
    <property type="entry name" value="6-blade_b-propeller_TolB-like"/>
</dbReference>
<dbReference type="InterPro" id="IPR003961">
    <property type="entry name" value="FN3_dom"/>
</dbReference>
<dbReference type="InterPro" id="IPR036116">
    <property type="entry name" value="FN3_sf"/>
</dbReference>
<dbReference type="InterPro" id="IPR013783">
    <property type="entry name" value="Ig-like_fold"/>
</dbReference>
<dbReference type="InterPro" id="IPR011009">
    <property type="entry name" value="Kinase-like_dom_sf"/>
</dbReference>
<dbReference type="InterPro" id="IPR000033">
    <property type="entry name" value="LDLR_classB_rpt"/>
</dbReference>
<dbReference type="InterPro" id="IPR000719">
    <property type="entry name" value="Prot_kinase_dom"/>
</dbReference>
<dbReference type="InterPro" id="IPR017441">
    <property type="entry name" value="Protein_kinase_ATP_BS"/>
</dbReference>
<dbReference type="InterPro" id="IPR050122">
    <property type="entry name" value="RTK"/>
</dbReference>
<dbReference type="InterPro" id="IPR001245">
    <property type="entry name" value="Ser-Thr/Tyr_kinase_cat_dom"/>
</dbReference>
<dbReference type="InterPro" id="IPR008266">
    <property type="entry name" value="Tyr_kinase_AS"/>
</dbReference>
<dbReference type="InterPro" id="IPR020635">
    <property type="entry name" value="Tyr_kinase_cat_dom"/>
</dbReference>
<dbReference type="PANTHER" id="PTHR24416:SF527">
    <property type="entry name" value="PROTO-ONCOGENE TYROSINE-PROTEIN KINASE ROS"/>
    <property type="match status" value="1"/>
</dbReference>
<dbReference type="PANTHER" id="PTHR24416">
    <property type="entry name" value="TYROSINE-PROTEIN KINASE RECEPTOR"/>
    <property type="match status" value="1"/>
</dbReference>
<dbReference type="Pfam" id="PF00041">
    <property type="entry name" value="fn3"/>
    <property type="match status" value="3"/>
</dbReference>
<dbReference type="Pfam" id="PF07714">
    <property type="entry name" value="PK_Tyr_Ser-Thr"/>
    <property type="match status" value="1"/>
</dbReference>
<dbReference type="PRINTS" id="PR00109">
    <property type="entry name" value="TYRKINASE"/>
</dbReference>
<dbReference type="SMART" id="SM00060">
    <property type="entry name" value="FN3"/>
    <property type="match status" value="9"/>
</dbReference>
<dbReference type="SMART" id="SM00135">
    <property type="entry name" value="LY"/>
    <property type="match status" value="3"/>
</dbReference>
<dbReference type="SMART" id="SM00219">
    <property type="entry name" value="TyrKc"/>
    <property type="match status" value="1"/>
</dbReference>
<dbReference type="SUPFAM" id="SSF49265">
    <property type="entry name" value="Fibronectin type III"/>
    <property type="match status" value="5"/>
</dbReference>
<dbReference type="SUPFAM" id="SSF56112">
    <property type="entry name" value="Protein kinase-like (PK-like)"/>
    <property type="match status" value="1"/>
</dbReference>
<dbReference type="SUPFAM" id="SSF63825">
    <property type="entry name" value="YWTD domain"/>
    <property type="match status" value="3"/>
</dbReference>
<dbReference type="PROSITE" id="PS50853">
    <property type="entry name" value="FN3"/>
    <property type="match status" value="9"/>
</dbReference>
<dbReference type="PROSITE" id="PS00107">
    <property type="entry name" value="PROTEIN_KINASE_ATP"/>
    <property type="match status" value="1"/>
</dbReference>
<dbReference type="PROSITE" id="PS50011">
    <property type="entry name" value="PROTEIN_KINASE_DOM"/>
    <property type="match status" value="1"/>
</dbReference>
<dbReference type="PROSITE" id="PS00109">
    <property type="entry name" value="PROTEIN_KINASE_TYR"/>
    <property type="match status" value="1"/>
</dbReference>
<proteinExistence type="evidence at protein level"/>
<comment type="function">
    <text evidence="6 7 8 9 10 11">Receptor tyrosine kinase (RTK) that plays a role in epithelial cell differentiation and regionalization of the proximal epididymal epithelium. NELL2 is an endogenous ligand for ROS1. Upon endogenous stimulation by NELL2, ROS1 activates the intracellular signaling pathway and triggers epididymal epithelial differentiation and subsequent sperm maturation (PubMed:32499443). May activate several downstream signaling pathways related to cell differentiation, proliferation, growth and survival including the PI3 kinase-mTOR signaling pathway. Mediates the phosphorylation of PTPN11, an activator of this pathway. May also phosphorylate and activate the transcription factor STAT3 to control anchorage-independent cell growth. Mediates the phosphorylation and the activation of VAV3, a guanine nucleotide exchange factor regulating cell morphology. May activate other downstream signaling proteins including AKT1, MAPK1, MAPK3, IRS1, and PLCG2.</text>
</comment>
<comment type="catalytic activity">
    <reaction evidence="1">
        <text>L-tyrosyl-[protein] + ATP = O-phospho-L-tyrosyl-[protein] + ADP + H(+)</text>
        <dbReference type="Rhea" id="RHEA:10596"/>
        <dbReference type="Rhea" id="RHEA-COMP:10136"/>
        <dbReference type="Rhea" id="RHEA-COMP:20101"/>
        <dbReference type="ChEBI" id="CHEBI:15378"/>
        <dbReference type="ChEBI" id="CHEBI:30616"/>
        <dbReference type="ChEBI" id="CHEBI:46858"/>
        <dbReference type="ChEBI" id="CHEBI:61978"/>
        <dbReference type="ChEBI" id="CHEBI:456216"/>
        <dbReference type="EC" id="2.7.10.1"/>
    </reaction>
</comment>
<comment type="activity regulation">
    <text evidence="6">Inhibited by dephosphorylation by PTPN6.</text>
</comment>
<comment type="subunit">
    <text evidence="1 6">Interacts with PTPN11; may activate the PI3 kinase-mTOR signaling pathway. Interacts with VAV3; constitutive interaction mediating VAV3 phosphorylation (By similarity). Interacts with PTPN6 (via SH2 1 domain); the interaction is direct and promotes ROS1 dephosphorylation.</text>
</comment>
<comment type="subcellular location">
    <subcellularLocation>
        <location evidence="12">Cell membrane</location>
        <topology evidence="12">Single-pass type I membrane protein</topology>
    </subcellularLocation>
</comment>
<comment type="tissue specificity">
    <text evidence="10">Expressed by epithelial cells of the caput epididymis (at protein level).</text>
</comment>
<comment type="PTM">
    <text evidence="1 6">Phosphorylated. Probably autophosphorylates. Phosphorylation at Tyr-2267 and/or Tyr-2327 recruits PTPN11 (By similarity). Phosphorylation at Tyr-2267 is required for the interaction with PTPN6 that mediates ROS1 dephosphorylation (PubMed:11266449). Phosphorylation at Tyr-2267 stimulates the kinase activity and the activation of the ERK1 signaling cascade (PubMed:11266449).</text>
</comment>
<comment type="disruption phenotype">
    <text evidence="10">Mice are viable and healthy. Females display normal fertility while males are sterile due a non-cell autonomous defect in sperm maturation. It is associated with the absence of tall columnar epithelial cells with long microvilli in the proximal part of the caput epididymidis.</text>
</comment>
<comment type="similarity">
    <text evidence="3">Belongs to the protein kinase superfamily. Tyr protein kinase family. Insulin receptor subfamily.</text>
</comment>
<keyword id="KW-0067">ATP-binding</keyword>
<keyword id="KW-1003">Cell membrane</keyword>
<keyword id="KW-0325">Glycoprotein</keyword>
<keyword id="KW-0418">Kinase</keyword>
<keyword id="KW-0472">Membrane</keyword>
<keyword id="KW-0547">Nucleotide-binding</keyword>
<keyword id="KW-0597">Phosphoprotein</keyword>
<keyword id="KW-0656">Proto-oncogene</keyword>
<keyword id="KW-0675">Receptor</keyword>
<keyword id="KW-1185">Reference proteome</keyword>
<keyword id="KW-0677">Repeat</keyword>
<keyword id="KW-0732">Signal</keyword>
<keyword id="KW-0808">Transferase</keyword>
<keyword id="KW-0812">Transmembrane</keyword>
<keyword id="KW-1133">Transmembrane helix</keyword>
<keyword id="KW-0829">Tyrosine-protein kinase</keyword>
<protein>
    <recommendedName>
        <fullName>Proto-oncogene tyrosine-protein kinase ROS</fullName>
        <ecNumber evidence="1">2.7.10.1</ecNumber>
    </recommendedName>
    <alternativeName>
        <fullName>Proto-oncogene c-Ros</fullName>
    </alternativeName>
    <alternativeName>
        <fullName>Proto-oncogene c-Ros-1</fullName>
    </alternativeName>
    <alternativeName>
        <fullName>Receptor tyrosine kinase c-ros oncogene 1</fullName>
    </alternativeName>
    <alternativeName>
        <fullName>c-Ros receptor tyrosine kinase</fullName>
    </alternativeName>
</protein>
<organism>
    <name type="scientific">Mus musculus</name>
    <name type="common">Mouse</name>
    <dbReference type="NCBI Taxonomy" id="10090"/>
    <lineage>
        <taxon>Eukaryota</taxon>
        <taxon>Metazoa</taxon>
        <taxon>Chordata</taxon>
        <taxon>Craniata</taxon>
        <taxon>Vertebrata</taxon>
        <taxon>Euteleostomi</taxon>
        <taxon>Mammalia</taxon>
        <taxon>Eutheria</taxon>
        <taxon>Euarchontoglires</taxon>
        <taxon>Glires</taxon>
        <taxon>Rodentia</taxon>
        <taxon>Myomorpha</taxon>
        <taxon>Muroidea</taxon>
        <taxon>Muridae</taxon>
        <taxon>Murinae</taxon>
        <taxon>Mus</taxon>
        <taxon>Mus</taxon>
    </lineage>
</organism>
<sequence>MKNICWLTLKLVKFVVLGCIIWISVAQSTVLSSCLTSCVTNLGRQLDSGTRYNLSEACIHGCQFWNSVDQETCALKCNDTYATICERESCEVGCSNAEGSYEEEVLESTELPTAPFASSIGSHGVTLRWNPANISGVKYIIQWKYAQLPGSWTFTETVSKLSYTVEPLHPFTEYIFRVVWIFTAQLHLYSPPSPSYRTHPYGVPETAPLILNMESWSPDTVEVSWAPPHFPGGPILGYNLRLISKNQKLDSGTQRTSFQFYSTLPNTTYRFSIAAVNEVGEGPEAESTVTTPSPSVQEEEQWLFLSRKTSLRKRSLKYLVDEAHCLWSDAIHHNITGISVYAQQQVVYFSEGTVIWMKGAANMSDVSDLRIFYQGSGLVSSISIDWLYQRMYFIMDKLVYVCELKNCSNLEEITPFSLIAPQKVVVDSYNGYLFYLLRDGIYRVNLPLPSGRDTKAVRIVESGTLKDFAVKPQSKRIIYFNDTMQLFMSTFLDGSAFHRVLPWVPLVTVKSFACENNDFLITDGKAIFQQDSLSFNEFIVGCDLSHIEEFGFGNLVIFGSSVQSYPLPGHPQEVSVLFGSREALIQWTPPALAIGASPSAWQNWTYEVKVYSQDILEITQVFSNISGTMLNVPELQSSTKYTVSVRASSPKGPGPWSAPSVGTTLVPATEPPFIMAVKEDGLWSKPLCSFGPGEFLSSDVGNVSDMDWYNNSLYYSDTKGNVYVRPLNGMDISENYHIPSIVGAGALAFEWLGHFLYWAGKTYVIQRQSVLTGHTDIVTHVKLLVNDMAVDSVGGYLYWTTLYSVESTRLNGESSLVLQAQPWLSGKKVIALTLDLSDGLLYWLVQDNQCIHLYTAVLRGWSGGDATITEFAAWSTSEISQNALMYYSGRLFWINGFRIITAQEIGQRTSVSVSEPAKFNQFTIIQTSLKPLPGNFSSTPKVIPDPVQESSFRIEGHTSSFQILWNEPPAVDWGIVFYSVEFSTHSKFLIIEQQSLPIFTVEGLEPYTLFNLSVTPYTYWGKGQKTSLSFRAPESVPSAPENPRIFILSSGRYTKKNEVVVEFRWNKPKHENGVLTKFEIFYHISKQSGTNRSTEDWMSASVIPPVMSFQLEAVSPEYTVAFQVRVFTSKGPGPFSDIVMSKTSEIKPCPYLISLLGNKIVFLDMDQNQVLWTFSLEGDVSTVGYTTDDEMGYFAQGDTLFLLNLRNHSSSKLFQDALVSDIRVIAVDWIARHLYFALKASQNGTQIFNVDLEHKVKSPREVKTCKAHTTIISFSIYPLLSRLYWTEVSDLGHQMFYCNISNHTSQHVLQPKASNQHGRSQCSCNVTESELSGAMTVDTSDPDRPWIYFTKRQEIWAMDLEGCQCWKVIMVPTIPGKRIISLTVDGEFIYWIMKTKDDAQIYQAKKGSGAILSQVKASRSKHILAYSSALQPFPDKAYLSLASDMVEATILYATNTSLTLKLPPVKTNLTWHGITHPTSTYLIYYMEANRANSSDRRHKMLESQENVARIEGLQPFSMYMIQIAVKNYYSEPLEHLPLGKEIQGQTKSGVPGAVCHINATVLSDTSLHVFWTESHKPNGPKESVRYQLVMSYLAPIPETPLRQGEFPSAKLSLLITKLSGGQLYVMKVLACHPEEMWCTESHPVSVNMFDTPEKPSALVPENTSLQLDWKARSNVNLTGFWFELQKWKYNEFYHVKASCSQGPVYVCNITDLQPYTSYNIRVVVVYTTGENSSSIPESFKTKAGVPSKPGIPKLLEGSKNSIQWEKAEDNGSRLMYYTLEVRKGISNDSQNQSSRWKVVFNGSCSSICTWRSKNLKGTFQFRAVAANEIGLGEYSEISEDITLVEDGVWITETSFILTIIVGIFLVATVPLTFVWHRSLKSHKASKEGLSVLNDNDKELAELRGLAAGVGLANACYAVHTVPTQEEIENLPAFPREKLSLRLLLGSGAFGEVYEGTAIDILGVGSGEIKVAVKTLKKGSTDQEKIEFLKEAHLMSKFNHPNILKQLGVCLLGEPQYIILELMEGGDLLSYLRKARGTTFHGPSLTLLDLVELCVDISKGCVYLEQMHFIHRDLAARNCLVSVKDYTSPRVVKIGDFGLAREIYKNDYYRKRGEGLLPVRWMAPENLMDGIFTSQSDVWSFGILVWEILTLGHQPYPAHSNLDVLNYVQAGGRLEPPRNCPDDLWNLMSQCWAQEPDQRPTFHNIQNQLQLFRNVFLNNVSHCGEAAPTGGVINKGFEGEDDEMVTLNSDDTMPVALMETKNQEGLNYMVLATKCSQGEGSYEGPLGPKELGSCDLKKDKKQPQADKDFCQEPQVAYGSPGLSEGLNYACLAHSEHGDVSE</sequence>
<reference key="1">
    <citation type="journal article" date="1994" name="Oncogene">
        <title>Biochemical and functional characterization of the murine ros protooncogene.</title>
        <authorList>
            <person name="Riethmacher D."/>
            <person name="Langholz O."/>
            <person name="Godecke S."/>
            <person name="Sachs M."/>
            <person name="Birchmeier C."/>
        </authorList>
    </citation>
    <scope>NUCLEOTIDE SEQUENCE [MRNA]</scope>
    <source>
        <strain>NMRI</strain>
        <tissue>Intestine</tissue>
    </source>
</reference>
<reference key="2">
    <citation type="journal article" date="1995" name="Kidney Int.">
        <title>Cloning of mouse c-ros renal cDNA, its role in development and relationship to extracellular matrix glycoproteins.</title>
        <authorList>
            <person name="Kanwar Y.S."/>
            <person name="Liu Z.Z."/>
            <person name="Kumar A."/>
            <person name="Wada J."/>
            <person name="Carone F.A."/>
        </authorList>
    </citation>
    <scope>NUCLEOTIDE SEQUENCE [MRNA]</scope>
    <source>
        <strain>CD-1</strain>
        <tissue>Kidney</tissue>
    </source>
</reference>
<reference key="3">
    <citation type="journal article" date="1996" name="Genes Dev.">
        <title>The c-ros tyrosine kinase receptor controls regionalization and differentiation of epithelial cells in the epididymis.</title>
        <authorList>
            <person name="Sonnenberg-Riethmacher E."/>
            <person name="Walter B."/>
            <person name="Riethmacher D."/>
            <person name="Goedecke S."/>
            <person name="Birchmeier C."/>
        </authorList>
    </citation>
    <scope>DISRUPTION PHENOTYPE</scope>
    <scope>FUNCTION IN EPITHELIUM DIFFERENTIATION</scope>
    <scope>TISSUE SPECIFICITY</scope>
</reference>
<reference key="4">
    <citation type="journal article" date="1996" name="Mol. Cell. Biol.">
        <title>Two chimeric receptors of epidermal growth factor receptor and c-Ros that differ in their transmembrane domains have opposite effects on cell growth.</title>
        <authorList>
            <person name="Xiong Q."/>
            <person name="Chan J.L."/>
            <person name="Zong C.S."/>
            <person name="Wang L.H."/>
        </authorList>
    </citation>
    <scope>FUNCTION IN CELL PROLIFERATION</scope>
</reference>
<reference key="5">
    <citation type="journal article" date="1998" name="J. Biol. Chem.">
        <title>Stat3 plays an important role in oncogenic Ros- and insulin-like growth factor I receptor-induced anchorage-independent growth.</title>
        <authorList>
            <person name="Zong C.S."/>
            <person name="Zeng L."/>
            <person name="Jiang Y."/>
            <person name="Sadowski H.B."/>
            <person name="Wang L.H."/>
        </authorList>
    </citation>
    <scope>FUNCTION IN STAT3 ACTIVATION</scope>
</reference>
<reference key="6">
    <citation type="journal article" date="2001" name="J. Cell Biol.">
        <title>Negative regulation of Ros receptor tyrosine kinase signaling. An epithelial function of the SH2 domain protein tyrosine phosphatase SHP-1.</title>
        <authorList>
            <person name="Keilhack H."/>
            <person name="Mueller M."/>
            <person name="Boehmer S.A."/>
            <person name="Frank C."/>
            <person name="Weidner K.M."/>
            <person name="Birchmeier W."/>
            <person name="Ligensa T."/>
            <person name="Berndt A."/>
            <person name="Kosmehl H."/>
            <person name="Guenther B."/>
            <person name="Mueller T."/>
            <person name="Birchmeier C."/>
            <person name="Boehmer F.D."/>
        </authorList>
    </citation>
    <scope>FUNCTION IN CELL PROLIFERATION</scope>
    <scope>INTERACTION WITH PTPN6</scope>
    <scope>ACTIVITY REGULATION</scope>
    <scope>PHOSPHORYLATION AT TYR-2267</scope>
    <scope>MUTAGENESIS OF TYR-2267</scope>
</reference>
<reference key="7">
    <citation type="journal article" date="2002" name="J. Biol. Chem.">
        <title>The role of phosphatidylinositol 3-kinase, rho family GTPases, and STAT3 in Ros-induced cell transformation.</title>
        <authorList>
            <person name="Nguyen K.T."/>
            <person name="Zong C.S."/>
            <person name="Uttamsingh S."/>
            <person name="Sachdev P."/>
            <person name="Bhanot M."/>
            <person name="Le M.T."/>
            <person name="Chan J.L."/>
            <person name="Wang L.H."/>
        </authorList>
    </citation>
    <scope>FUNCTION IN PI3 KINASE AND STAT3 ACTIVATION</scope>
</reference>
<reference key="8">
    <citation type="journal article" date="2020" name="Science">
        <title>NELL2-mediated lumicrine signaling through OVCH2 is required for male fertility.</title>
        <authorList>
            <person name="Kiyozumi D."/>
            <person name="Noda T."/>
            <person name="Yamaguchi R."/>
            <person name="Tobita T."/>
            <person name="Matsumura T."/>
            <person name="Shimada K."/>
            <person name="Kodani M."/>
            <person name="Kohda T."/>
            <person name="Fujihara Y."/>
            <person name="Ozawa M."/>
            <person name="Yu Z."/>
            <person name="Miklossy G."/>
            <person name="Bohren K.M."/>
            <person name="Horie M."/>
            <person name="Okabe M."/>
            <person name="Matzuk M.M."/>
            <person name="Ikawa M."/>
        </authorList>
    </citation>
    <scope>FUNCTION</scope>
    <scope>INTERACTION WITH NELL2</scope>
</reference>
<name>ROS1_MOUSE</name>